<sequence length="240" mass="25465">MRSRKSLPRVEQAHLPWHPPGLVAGVDEAGRGPLAGPVVAAAVILDELQPIEGLADSKTLTAARREALFDEIRAKALCCSVAEATVEEIDTLNILQATMLAMRRAVAGLRLKPVRVLVDGNRLPPLDVPAEAIVKGDALVQAISAASILAKVTRDRWCAQLHEAYPHYGFASHKGYGTAEHMAALQAHGACPEHRRSFAPVAAAVQRTVVMQATATIVTTVETTVSVRPAAPRAAEGLHA</sequence>
<keyword id="KW-0963">Cytoplasm</keyword>
<keyword id="KW-0255">Endonuclease</keyword>
<keyword id="KW-0378">Hydrolase</keyword>
<keyword id="KW-0464">Manganese</keyword>
<keyword id="KW-0479">Metal-binding</keyword>
<keyword id="KW-0540">Nuclease</keyword>
<name>RNH2_PARC0</name>
<feature type="chain" id="PRO_0000334853" description="Ribonuclease HII">
    <location>
        <begin position="1"/>
        <end position="240"/>
    </location>
</feature>
<feature type="domain" description="RNase H type-2" evidence="2">
    <location>
        <begin position="21"/>
        <end position="210"/>
    </location>
</feature>
<feature type="binding site" evidence="1">
    <location>
        <position position="27"/>
    </location>
    <ligand>
        <name>a divalent metal cation</name>
        <dbReference type="ChEBI" id="CHEBI:60240"/>
    </ligand>
</feature>
<feature type="binding site" evidence="1">
    <location>
        <position position="28"/>
    </location>
    <ligand>
        <name>a divalent metal cation</name>
        <dbReference type="ChEBI" id="CHEBI:60240"/>
    </ligand>
</feature>
<feature type="binding site" evidence="1">
    <location>
        <position position="119"/>
    </location>
    <ligand>
        <name>a divalent metal cation</name>
        <dbReference type="ChEBI" id="CHEBI:60240"/>
    </ligand>
</feature>
<gene>
    <name evidence="1" type="primary">rnhB</name>
    <name type="ordered locus">Aave_1837</name>
</gene>
<protein>
    <recommendedName>
        <fullName evidence="1">Ribonuclease HII</fullName>
        <shortName evidence="1">RNase HII</shortName>
        <ecNumber evidence="1">3.1.26.4</ecNumber>
    </recommendedName>
</protein>
<evidence type="ECO:0000255" key="1">
    <source>
        <dbReference type="HAMAP-Rule" id="MF_00052"/>
    </source>
</evidence>
<evidence type="ECO:0000255" key="2">
    <source>
        <dbReference type="PROSITE-ProRule" id="PRU01319"/>
    </source>
</evidence>
<reference key="1">
    <citation type="submission" date="2006-12" db="EMBL/GenBank/DDBJ databases">
        <title>Complete sequence of Acidovorax avenae subsp. citrulli AAC00-1.</title>
        <authorList>
            <person name="Copeland A."/>
            <person name="Lucas S."/>
            <person name="Lapidus A."/>
            <person name="Barry K."/>
            <person name="Detter J.C."/>
            <person name="Glavina del Rio T."/>
            <person name="Dalin E."/>
            <person name="Tice H."/>
            <person name="Pitluck S."/>
            <person name="Kiss H."/>
            <person name="Brettin T."/>
            <person name="Bruce D."/>
            <person name="Han C."/>
            <person name="Tapia R."/>
            <person name="Gilna P."/>
            <person name="Schmutz J."/>
            <person name="Larimer F."/>
            <person name="Land M."/>
            <person name="Hauser L."/>
            <person name="Kyrpides N."/>
            <person name="Kim E."/>
            <person name="Stahl D."/>
            <person name="Richardson P."/>
        </authorList>
    </citation>
    <scope>NUCLEOTIDE SEQUENCE [LARGE SCALE GENOMIC DNA]</scope>
    <source>
        <strain>AAC00-1</strain>
    </source>
</reference>
<proteinExistence type="inferred from homology"/>
<dbReference type="EC" id="3.1.26.4" evidence="1"/>
<dbReference type="EMBL" id="CP000512">
    <property type="protein sequence ID" value="ABM32421.1"/>
    <property type="molecule type" value="Genomic_DNA"/>
</dbReference>
<dbReference type="RefSeq" id="WP_011794967.1">
    <property type="nucleotide sequence ID" value="NC_008752.1"/>
</dbReference>
<dbReference type="SMR" id="A1TN83"/>
<dbReference type="STRING" id="397945.Aave_1837"/>
<dbReference type="GeneID" id="79793154"/>
<dbReference type="KEGG" id="aav:Aave_1837"/>
<dbReference type="eggNOG" id="COG0164">
    <property type="taxonomic scope" value="Bacteria"/>
</dbReference>
<dbReference type="HOGENOM" id="CLU_036532_3_2_4"/>
<dbReference type="OrthoDB" id="9803420at2"/>
<dbReference type="Proteomes" id="UP000002596">
    <property type="component" value="Chromosome"/>
</dbReference>
<dbReference type="GO" id="GO:0005737">
    <property type="term" value="C:cytoplasm"/>
    <property type="evidence" value="ECO:0007669"/>
    <property type="project" value="UniProtKB-SubCell"/>
</dbReference>
<dbReference type="GO" id="GO:0032299">
    <property type="term" value="C:ribonuclease H2 complex"/>
    <property type="evidence" value="ECO:0007669"/>
    <property type="project" value="TreeGrafter"/>
</dbReference>
<dbReference type="GO" id="GO:0030145">
    <property type="term" value="F:manganese ion binding"/>
    <property type="evidence" value="ECO:0007669"/>
    <property type="project" value="UniProtKB-UniRule"/>
</dbReference>
<dbReference type="GO" id="GO:0003723">
    <property type="term" value="F:RNA binding"/>
    <property type="evidence" value="ECO:0007669"/>
    <property type="project" value="InterPro"/>
</dbReference>
<dbReference type="GO" id="GO:0004523">
    <property type="term" value="F:RNA-DNA hybrid ribonuclease activity"/>
    <property type="evidence" value="ECO:0007669"/>
    <property type="project" value="UniProtKB-UniRule"/>
</dbReference>
<dbReference type="GO" id="GO:0043137">
    <property type="term" value="P:DNA replication, removal of RNA primer"/>
    <property type="evidence" value="ECO:0007669"/>
    <property type="project" value="TreeGrafter"/>
</dbReference>
<dbReference type="GO" id="GO:0006298">
    <property type="term" value="P:mismatch repair"/>
    <property type="evidence" value="ECO:0007669"/>
    <property type="project" value="TreeGrafter"/>
</dbReference>
<dbReference type="CDD" id="cd07182">
    <property type="entry name" value="RNase_HII_bacteria_HII_like"/>
    <property type="match status" value="1"/>
</dbReference>
<dbReference type="FunFam" id="3.30.420.10:FF:000006">
    <property type="entry name" value="Ribonuclease HII"/>
    <property type="match status" value="1"/>
</dbReference>
<dbReference type="Gene3D" id="3.30.420.10">
    <property type="entry name" value="Ribonuclease H-like superfamily/Ribonuclease H"/>
    <property type="match status" value="1"/>
</dbReference>
<dbReference type="HAMAP" id="MF_00052_B">
    <property type="entry name" value="RNase_HII_B"/>
    <property type="match status" value="1"/>
</dbReference>
<dbReference type="InterPro" id="IPR022898">
    <property type="entry name" value="RNase_HII"/>
</dbReference>
<dbReference type="InterPro" id="IPR001352">
    <property type="entry name" value="RNase_HII/HIII"/>
</dbReference>
<dbReference type="InterPro" id="IPR024567">
    <property type="entry name" value="RNase_HII/HIII_dom"/>
</dbReference>
<dbReference type="InterPro" id="IPR012337">
    <property type="entry name" value="RNaseH-like_sf"/>
</dbReference>
<dbReference type="InterPro" id="IPR036397">
    <property type="entry name" value="RNaseH_sf"/>
</dbReference>
<dbReference type="NCBIfam" id="NF000594">
    <property type="entry name" value="PRK00015.1-1"/>
    <property type="match status" value="1"/>
</dbReference>
<dbReference type="NCBIfam" id="NF000595">
    <property type="entry name" value="PRK00015.1-3"/>
    <property type="match status" value="1"/>
</dbReference>
<dbReference type="NCBIfam" id="NF000596">
    <property type="entry name" value="PRK00015.1-4"/>
    <property type="match status" value="1"/>
</dbReference>
<dbReference type="PANTHER" id="PTHR10954">
    <property type="entry name" value="RIBONUCLEASE H2 SUBUNIT A"/>
    <property type="match status" value="1"/>
</dbReference>
<dbReference type="PANTHER" id="PTHR10954:SF18">
    <property type="entry name" value="RIBONUCLEASE HII"/>
    <property type="match status" value="1"/>
</dbReference>
<dbReference type="Pfam" id="PF01351">
    <property type="entry name" value="RNase_HII"/>
    <property type="match status" value="1"/>
</dbReference>
<dbReference type="SUPFAM" id="SSF53098">
    <property type="entry name" value="Ribonuclease H-like"/>
    <property type="match status" value="1"/>
</dbReference>
<dbReference type="PROSITE" id="PS51975">
    <property type="entry name" value="RNASE_H_2"/>
    <property type="match status" value="1"/>
</dbReference>
<accession>A1TN83</accession>
<organism>
    <name type="scientific">Paracidovorax citrulli (strain AAC00-1)</name>
    <name type="common">Acidovorax citrulli</name>
    <dbReference type="NCBI Taxonomy" id="397945"/>
    <lineage>
        <taxon>Bacteria</taxon>
        <taxon>Pseudomonadati</taxon>
        <taxon>Pseudomonadota</taxon>
        <taxon>Betaproteobacteria</taxon>
        <taxon>Burkholderiales</taxon>
        <taxon>Comamonadaceae</taxon>
        <taxon>Paracidovorax</taxon>
    </lineage>
</organism>
<comment type="function">
    <text evidence="1">Endonuclease that specifically degrades the RNA of RNA-DNA hybrids.</text>
</comment>
<comment type="catalytic activity">
    <reaction evidence="1">
        <text>Endonucleolytic cleavage to 5'-phosphomonoester.</text>
        <dbReference type="EC" id="3.1.26.4"/>
    </reaction>
</comment>
<comment type="cofactor">
    <cofactor evidence="1">
        <name>Mn(2+)</name>
        <dbReference type="ChEBI" id="CHEBI:29035"/>
    </cofactor>
    <cofactor evidence="1">
        <name>Mg(2+)</name>
        <dbReference type="ChEBI" id="CHEBI:18420"/>
    </cofactor>
    <text evidence="1">Manganese or magnesium. Binds 1 divalent metal ion per monomer in the absence of substrate. May bind a second metal ion after substrate binding.</text>
</comment>
<comment type="subcellular location">
    <subcellularLocation>
        <location evidence="1">Cytoplasm</location>
    </subcellularLocation>
</comment>
<comment type="similarity">
    <text evidence="1">Belongs to the RNase HII family.</text>
</comment>